<feature type="chain" id="PRO_0000150419" description="Olfactory receptor 1D2">
    <location>
        <begin position="1"/>
        <end position="312"/>
    </location>
</feature>
<feature type="topological domain" description="Extracellular" evidence="1">
    <location>
        <begin position="1"/>
        <end position="25"/>
    </location>
</feature>
<feature type="transmembrane region" description="Helical; Name=1" evidence="1">
    <location>
        <begin position="26"/>
        <end position="49"/>
    </location>
</feature>
<feature type="topological domain" description="Cytoplasmic" evidence="1">
    <location>
        <begin position="50"/>
        <end position="57"/>
    </location>
</feature>
<feature type="transmembrane region" description="Helical; Name=2" evidence="1">
    <location>
        <begin position="58"/>
        <end position="79"/>
    </location>
</feature>
<feature type="topological domain" description="Extracellular" evidence="1">
    <location>
        <begin position="80"/>
        <end position="100"/>
    </location>
</feature>
<feature type="transmembrane region" description="Helical; Name=3" evidence="1">
    <location>
        <begin position="101"/>
        <end position="120"/>
    </location>
</feature>
<feature type="topological domain" description="Cytoplasmic" evidence="1">
    <location>
        <begin position="121"/>
        <end position="139"/>
    </location>
</feature>
<feature type="transmembrane region" description="Helical; Name=4" evidence="1">
    <location>
        <begin position="140"/>
        <end position="158"/>
    </location>
</feature>
<feature type="topological domain" description="Extracellular" evidence="1">
    <location>
        <begin position="159"/>
        <end position="196"/>
    </location>
</feature>
<feature type="transmembrane region" description="Helical; Name=5" evidence="1">
    <location>
        <begin position="197"/>
        <end position="219"/>
    </location>
</feature>
<feature type="topological domain" description="Cytoplasmic" evidence="1">
    <location>
        <begin position="220"/>
        <end position="236"/>
    </location>
</feature>
<feature type="transmembrane region" description="Helical; Name=6" evidence="1">
    <location>
        <begin position="237"/>
        <end position="259"/>
    </location>
</feature>
<feature type="topological domain" description="Extracellular" evidence="1">
    <location>
        <begin position="260"/>
        <end position="271"/>
    </location>
</feature>
<feature type="transmembrane region" description="Helical; Name=7" evidence="1">
    <location>
        <begin position="272"/>
        <end position="291"/>
    </location>
</feature>
<feature type="topological domain" description="Cytoplasmic" evidence="1">
    <location>
        <begin position="292"/>
        <end position="312"/>
    </location>
</feature>
<feature type="glycosylation site" description="N-linked (GlcNAc...) asparagine" evidence="1">
    <location>
        <position position="5"/>
    </location>
</feature>
<feature type="glycosylation site" description="N-linked (GlcNAc...) asparagine" evidence="1">
    <location>
        <position position="195"/>
    </location>
</feature>
<feature type="disulfide bond" evidence="2">
    <location>
        <begin position="97"/>
        <end position="189"/>
    </location>
</feature>
<sequence>MDGGNQSEGSEFLLLGMSESPEQQQILFWMFLSMYLVTVVGNVLIILAINSDSHLHTPMYFFLANLSFTDLFFVTNTIPKMLVNLQSQNKAISYAGCLTQLYFLVSLVALDNLILAVMAYDRYVAICCPLHYTTAMSPKLCILLLSLCWVLSVLYGLIHTILMTRVTFCGSRKIHYIFCEMYVLLRMACSNIQINHTVLIATGCFIFLIPFGFVIISYVLIIRAILRIPSVSKKYKAFSTCASHLGAVSLFYGTLCMVYLKPLHTFSVKDSVATVMYAVVTPMMNPFIYSLRNKDMHGALGRLLDTHFKRLT</sequence>
<accession>Q9TU93</accession>
<evidence type="ECO:0000255" key="1"/>
<evidence type="ECO:0000255" key="2">
    <source>
        <dbReference type="PROSITE-ProRule" id="PRU00521"/>
    </source>
</evidence>
<evidence type="ECO:0000305" key="3"/>
<gene>
    <name type="primary">OR1D2</name>
</gene>
<name>OR1D2_GORGO</name>
<organism>
    <name type="scientific">Gorilla gorilla gorilla</name>
    <name type="common">Western lowland gorilla</name>
    <dbReference type="NCBI Taxonomy" id="9595"/>
    <lineage>
        <taxon>Eukaryota</taxon>
        <taxon>Metazoa</taxon>
        <taxon>Chordata</taxon>
        <taxon>Craniata</taxon>
        <taxon>Vertebrata</taxon>
        <taxon>Euteleostomi</taxon>
        <taxon>Mammalia</taxon>
        <taxon>Eutheria</taxon>
        <taxon>Euarchontoglires</taxon>
        <taxon>Primates</taxon>
        <taxon>Haplorrhini</taxon>
        <taxon>Catarrhini</taxon>
        <taxon>Hominidae</taxon>
        <taxon>Gorilla</taxon>
    </lineage>
</organism>
<dbReference type="EMBL" id="AF101750">
    <property type="protein sequence ID" value="AAF03331.1"/>
    <property type="molecule type" value="Genomic_DNA"/>
</dbReference>
<dbReference type="SMR" id="Q9TU93"/>
<dbReference type="FunCoup" id="Q9TU93">
    <property type="interactions" value="323"/>
</dbReference>
<dbReference type="STRING" id="9593.ENSGGOP00000012413"/>
<dbReference type="GlyCosmos" id="Q9TU93">
    <property type="glycosylation" value="2 sites, No reported glycans"/>
</dbReference>
<dbReference type="eggNOG" id="ENOG502T9JB">
    <property type="taxonomic scope" value="Eukaryota"/>
</dbReference>
<dbReference type="InParanoid" id="Q9TU93"/>
<dbReference type="Proteomes" id="UP000001519">
    <property type="component" value="Unplaced"/>
</dbReference>
<dbReference type="GO" id="GO:0005886">
    <property type="term" value="C:plasma membrane"/>
    <property type="evidence" value="ECO:0000318"/>
    <property type="project" value="GO_Central"/>
</dbReference>
<dbReference type="GO" id="GO:0004930">
    <property type="term" value="F:G protein-coupled receptor activity"/>
    <property type="evidence" value="ECO:0007669"/>
    <property type="project" value="UniProtKB-KW"/>
</dbReference>
<dbReference type="GO" id="GO:0004984">
    <property type="term" value="F:olfactory receptor activity"/>
    <property type="evidence" value="ECO:0000318"/>
    <property type="project" value="GO_Central"/>
</dbReference>
<dbReference type="GO" id="GO:0050911">
    <property type="term" value="P:detection of chemical stimulus involved in sensory perception of smell"/>
    <property type="evidence" value="ECO:0000318"/>
    <property type="project" value="GO_Central"/>
</dbReference>
<dbReference type="CDD" id="cd15918">
    <property type="entry name" value="7tmA_OR1_7-like"/>
    <property type="match status" value="1"/>
</dbReference>
<dbReference type="FunFam" id="1.20.1070.10:FF:000009">
    <property type="entry name" value="Olfactory receptor"/>
    <property type="match status" value="1"/>
</dbReference>
<dbReference type="Gene3D" id="1.20.1070.10">
    <property type="entry name" value="Rhodopsin 7-helix transmembrane proteins"/>
    <property type="match status" value="1"/>
</dbReference>
<dbReference type="InterPro" id="IPR000276">
    <property type="entry name" value="GPCR_Rhodpsn"/>
</dbReference>
<dbReference type="InterPro" id="IPR017452">
    <property type="entry name" value="GPCR_Rhodpsn_7TM"/>
</dbReference>
<dbReference type="InterPro" id="IPR000725">
    <property type="entry name" value="Olfact_rcpt"/>
</dbReference>
<dbReference type="PANTHER" id="PTHR48001">
    <property type="entry name" value="OLFACTORY RECEPTOR"/>
    <property type="match status" value="1"/>
</dbReference>
<dbReference type="Pfam" id="PF13853">
    <property type="entry name" value="7tm_4"/>
    <property type="match status" value="1"/>
</dbReference>
<dbReference type="PRINTS" id="PR00237">
    <property type="entry name" value="GPCRRHODOPSN"/>
</dbReference>
<dbReference type="PRINTS" id="PR00245">
    <property type="entry name" value="OLFACTORYR"/>
</dbReference>
<dbReference type="SUPFAM" id="SSF81321">
    <property type="entry name" value="Family A G protein-coupled receptor-like"/>
    <property type="match status" value="1"/>
</dbReference>
<dbReference type="PROSITE" id="PS00237">
    <property type="entry name" value="G_PROTEIN_RECEP_F1_1"/>
    <property type="match status" value="1"/>
</dbReference>
<dbReference type="PROSITE" id="PS50262">
    <property type="entry name" value="G_PROTEIN_RECEP_F1_2"/>
    <property type="match status" value="1"/>
</dbReference>
<keyword id="KW-1003">Cell membrane</keyword>
<keyword id="KW-1015">Disulfide bond</keyword>
<keyword id="KW-0297">G-protein coupled receptor</keyword>
<keyword id="KW-0325">Glycoprotein</keyword>
<keyword id="KW-0472">Membrane</keyword>
<keyword id="KW-0552">Olfaction</keyword>
<keyword id="KW-0675">Receptor</keyword>
<keyword id="KW-1185">Reference proteome</keyword>
<keyword id="KW-0716">Sensory transduction</keyword>
<keyword id="KW-0807">Transducer</keyword>
<keyword id="KW-0812">Transmembrane</keyword>
<keyword id="KW-1133">Transmembrane helix</keyword>
<protein>
    <recommendedName>
        <fullName>Olfactory receptor 1D2</fullName>
    </recommendedName>
</protein>
<reference key="1">
    <citation type="journal article" date="1999" name="Genomics">
        <title>Primate evolution of an olfactory receptor cluster: diversification by gene conversion and recent emergence of pseudogenes.</title>
        <authorList>
            <person name="Sharon D."/>
            <person name="Glusman G."/>
            <person name="Pilpel Y."/>
            <person name="Khen M."/>
            <person name="Gruetzner F."/>
            <person name="Haaf T."/>
            <person name="Lancet D."/>
        </authorList>
    </citation>
    <scope>NUCLEOTIDE SEQUENCE [GENOMIC DNA]</scope>
</reference>
<proteinExistence type="inferred from homology"/>
<comment type="function">
    <text evidence="3">Odorant receptor.</text>
</comment>
<comment type="subcellular location">
    <subcellularLocation>
        <location>Cell membrane</location>
        <topology>Multi-pass membrane protein</topology>
    </subcellularLocation>
</comment>
<comment type="similarity">
    <text evidence="2">Belongs to the G-protein coupled receptor 1 family.</text>
</comment>